<accession>Q0T2M5</accession>
<evidence type="ECO:0000255" key="1">
    <source>
        <dbReference type="HAMAP-Rule" id="MF_01869"/>
    </source>
</evidence>
<protein>
    <recommendedName>
        <fullName evidence="1">Probable 4-amino-4-deoxy-L-arabinose-phosphoundecaprenol flippase subunit ArnE</fullName>
        <shortName evidence="1">L-Ara4N-phosphoundecaprenol flippase subunit ArnE</shortName>
    </recommendedName>
    <alternativeName>
        <fullName evidence="1">Undecaprenyl phosphate-aminoarabinose flippase subunit ArnE</fullName>
    </alternativeName>
</protein>
<organism>
    <name type="scientific">Shigella flexneri serotype 5b (strain 8401)</name>
    <dbReference type="NCBI Taxonomy" id="373384"/>
    <lineage>
        <taxon>Bacteria</taxon>
        <taxon>Pseudomonadati</taxon>
        <taxon>Pseudomonadota</taxon>
        <taxon>Gammaproteobacteria</taxon>
        <taxon>Enterobacterales</taxon>
        <taxon>Enterobacteriaceae</taxon>
        <taxon>Shigella</taxon>
    </lineage>
</organism>
<comment type="function">
    <text evidence="1">Translocates 4-amino-4-deoxy-L-arabinose-phosphoundecaprenol (alpha-L-Ara4N-phosphoundecaprenol) from the cytoplasmic to the periplasmic side of the inner membrane.</text>
</comment>
<comment type="pathway">
    <text evidence="1">Bacterial outer membrane biogenesis; lipopolysaccharide biosynthesis.</text>
</comment>
<comment type="subunit">
    <text evidence="1">Heterodimer of ArnE and ArnF.</text>
</comment>
<comment type="subcellular location">
    <subcellularLocation>
        <location evidence="1">Cell inner membrane</location>
        <topology evidence="1">Multi-pass membrane protein</topology>
    </subcellularLocation>
</comment>
<comment type="similarity">
    <text evidence="1">Belongs to the ArnE family.</text>
</comment>
<proteinExistence type="inferred from homology"/>
<name>ARNE_SHIF8</name>
<reference key="1">
    <citation type="journal article" date="2006" name="BMC Genomics">
        <title>Complete genome sequence of Shigella flexneri 5b and comparison with Shigella flexneri 2a.</title>
        <authorList>
            <person name="Nie H."/>
            <person name="Yang F."/>
            <person name="Zhang X."/>
            <person name="Yang J."/>
            <person name="Chen L."/>
            <person name="Wang J."/>
            <person name="Xiong Z."/>
            <person name="Peng J."/>
            <person name="Sun L."/>
            <person name="Dong J."/>
            <person name="Xue Y."/>
            <person name="Xu X."/>
            <person name="Chen S."/>
            <person name="Yao Z."/>
            <person name="Shen Y."/>
            <person name="Jin Q."/>
        </authorList>
    </citation>
    <scope>NUCLEOTIDE SEQUENCE [LARGE SCALE GENOMIC DNA]</scope>
    <source>
        <strain>8401</strain>
    </source>
</reference>
<keyword id="KW-0997">Cell inner membrane</keyword>
<keyword id="KW-1003">Cell membrane</keyword>
<keyword id="KW-0441">Lipid A biosynthesis</keyword>
<keyword id="KW-0444">Lipid biosynthesis</keyword>
<keyword id="KW-0443">Lipid metabolism</keyword>
<keyword id="KW-0448">Lipopolysaccharide biosynthesis</keyword>
<keyword id="KW-0472">Membrane</keyword>
<keyword id="KW-0812">Transmembrane</keyword>
<keyword id="KW-1133">Transmembrane helix</keyword>
<keyword id="KW-0813">Transport</keyword>
<dbReference type="EMBL" id="CP000266">
    <property type="protein sequence ID" value="ABF04440.1"/>
    <property type="molecule type" value="Genomic_DNA"/>
</dbReference>
<dbReference type="RefSeq" id="WP_000638022.1">
    <property type="nucleotide sequence ID" value="NC_008258.1"/>
</dbReference>
<dbReference type="SMR" id="Q0T2M5"/>
<dbReference type="KEGG" id="sfv:SFV_2328"/>
<dbReference type="HOGENOM" id="CLU_131462_5_1_6"/>
<dbReference type="UniPathway" id="UPA00030"/>
<dbReference type="Proteomes" id="UP000000659">
    <property type="component" value="Chromosome"/>
</dbReference>
<dbReference type="GO" id="GO:0005886">
    <property type="term" value="C:plasma membrane"/>
    <property type="evidence" value="ECO:0007669"/>
    <property type="project" value="UniProtKB-SubCell"/>
</dbReference>
<dbReference type="GO" id="GO:1901505">
    <property type="term" value="F:carbohydrate derivative transmembrane transporter activity"/>
    <property type="evidence" value="ECO:0007669"/>
    <property type="project" value="InterPro"/>
</dbReference>
<dbReference type="GO" id="GO:0009245">
    <property type="term" value="P:lipid A biosynthetic process"/>
    <property type="evidence" value="ECO:0007669"/>
    <property type="project" value="UniProtKB-UniRule"/>
</dbReference>
<dbReference type="GO" id="GO:0009103">
    <property type="term" value="P:lipopolysaccharide biosynthetic process"/>
    <property type="evidence" value="ECO:0007669"/>
    <property type="project" value="UniProtKB-UniRule"/>
</dbReference>
<dbReference type="FunFam" id="1.10.3730.20:FF:000002">
    <property type="entry name" value="Probable 4-amino-4-deoxy-L-arabinose-phosphoundecaprenol flippase subunit ArnE"/>
    <property type="match status" value="1"/>
</dbReference>
<dbReference type="Gene3D" id="1.10.3730.20">
    <property type="match status" value="1"/>
</dbReference>
<dbReference type="HAMAP" id="MF_01869">
    <property type="entry name" value="Flippase_ArnE"/>
    <property type="match status" value="1"/>
</dbReference>
<dbReference type="InterPro" id="IPR000620">
    <property type="entry name" value="EamA_dom"/>
</dbReference>
<dbReference type="InterPro" id="IPR022883">
    <property type="entry name" value="Flippase_ArnE"/>
</dbReference>
<dbReference type="InterPro" id="IPR000390">
    <property type="entry name" value="Small_drug/metabolite_transptr"/>
</dbReference>
<dbReference type="NCBIfam" id="NF011625">
    <property type="entry name" value="PRK15051.1"/>
    <property type="match status" value="1"/>
</dbReference>
<dbReference type="PANTHER" id="PTHR30561:SF23">
    <property type="entry name" value="4-AMINO-4-DEOXY-L-ARABINOSE-PHOSPHOUNDECAPRENOL FLIPPASE SUBUNIT ARNE-RELATED"/>
    <property type="match status" value="1"/>
</dbReference>
<dbReference type="PANTHER" id="PTHR30561">
    <property type="entry name" value="SMR FAMILY PROTON-DEPENDENT DRUG EFFLUX TRANSPORTER SUGE"/>
    <property type="match status" value="1"/>
</dbReference>
<dbReference type="Pfam" id="PF00892">
    <property type="entry name" value="EamA"/>
    <property type="match status" value="1"/>
</dbReference>
<dbReference type="SUPFAM" id="SSF103481">
    <property type="entry name" value="Multidrug resistance efflux transporter EmrE"/>
    <property type="match status" value="1"/>
</dbReference>
<gene>
    <name evidence="1" type="primary">arnE</name>
    <name type="ordered locus">SFV_2328</name>
</gene>
<feature type="chain" id="PRO_0000383008" description="Probable 4-amino-4-deoxy-L-arabinose-phosphoundecaprenol flippase subunit ArnE">
    <location>
        <begin position="1"/>
        <end position="111"/>
    </location>
</feature>
<feature type="transmembrane region" description="Helical" evidence="1">
    <location>
        <begin position="36"/>
        <end position="56"/>
    </location>
</feature>
<feature type="transmembrane region" description="Helical" evidence="1">
    <location>
        <begin position="61"/>
        <end position="81"/>
    </location>
</feature>
<feature type="transmembrane region" description="Helical" evidence="1">
    <location>
        <begin position="88"/>
        <end position="108"/>
    </location>
</feature>
<feature type="domain" description="EamA" evidence="1">
    <location>
        <begin position="40"/>
        <end position="109"/>
    </location>
</feature>
<sequence>MIWLTLVFASLLSVAGQLCQKQATCFVAINKRRKHIVLWLGLALACIGLAMMLWLLVLQNVPVGIAYPMLSLNFVWVTLAAVKLWHEPVSPRHWCGVAFIIGGIVILGSTV</sequence>